<reference key="1">
    <citation type="journal article" date="2009" name="PLoS ONE">
        <title>Salmonella paratyphi C: genetic divergence from Salmonella choleraesuis and pathogenic convergence with Salmonella typhi.</title>
        <authorList>
            <person name="Liu W.-Q."/>
            <person name="Feng Y."/>
            <person name="Wang Y."/>
            <person name="Zou Q.-H."/>
            <person name="Chen F."/>
            <person name="Guo J.-T."/>
            <person name="Peng Y.-H."/>
            <person name="Jin Y."/>
            <person name="Li Y.-G."/>
            <person name="Hu S.-N."/>
            <person name="Johnston R.N."/>
            <person name="Liu G.-R."/>
            <person name="Liu S.-L."/>
        </authorList>
    </citation>
    <scope>NUCLEOTIDE SEQUENCE [LARGE SCALE GENOMIC DNA]</scope>
    <source>
        <strain>RKS4594</strain>
    </source>
</reference>
<feature type="chain" id="PRO_1000164801" description="Acyl carrier protein">
    <location>
        <begin position="1"/>
        <end position="78"/>
    </location>
</feature>
<feature type="domain" description="Carrier" evidence="2">
    <location>
        <begin position="2"/>
        <end position="77"/>
    </location>
</feature>
<feature type="modified residue" description="O-(pantetheine 4'-phosphoryl)serine" evidence="2">
    <location>
        <position position="37"/>
    </location>
</feature>
<gene>
    <name evidence="1" type="primary">acpP</name>
    <name type="ordered locus">SPC_2552</name>
</gene>
<accession>C0Q798</accession>
<comment type="function">
    <text evidence="1">Carrier of the growing fatty acid chain in fatty acid biosynthesis.</text>
</comment>
<comment type="pathway">
    <text evidence="1">Lipid metabolism; fatty acid biosynthesis.</text>
</comment>
<comment type="subcellular location">
    <subcellularLocation>
        <location evidence="1">Cytoplasm</location>
    </subcellularLocation>
</comment>
<comment type="PTM">
    <text evidence="1">4'-phosphopantetheine is transferred from CoA to a specific serine of apo-ACP by AcpS. This modification is essential for activity because fatty acids are bound in thioester linkage to the sulfhydryl of the prosthetic group.</text>
</comment>
<comment type="similarity">
    <text evidence="1">Belongs to the acyl carrier protein (ACP) family.</text>
</comment>
<evidence type="ECO:0000255" key="1">
    <source>
        <dbReference type="HAMAP-Rule" id="MF_01217"/>
    </source>
</evidence>
<evidence type="ECO:0000255" key="2">
    <source>
        <dbReference type="PROSITE-ProRule" id="PRU00258"/>
    </source>
</evidence>
<organism>
    <name type="scientific">Salmonella paratyphi C (strain RKS4594)</name>
    <dbReference type="NCBI Taxonomy" id="476213"/>
    <lineage>
        <taxon>Bacteria</taxon>
        <taxon>Pseudomonadati</taxon>
        <taxon>Pseudomonadota</taxon>
        <taxon>Gammaproteobacteria</taxon>
        <taxon>Enterobacterales</taxon>
        <taxon>Enterobacteriaceae</taxon>
        <taxon>Salmonella</taxon>
    </lineage>
</organism>
<keyword id="KW-0963">Cytoplasm</keyword>
<keyword id="KW-0275">Fatty acid biosynthesis</keyword>
<keyword id="KW-0276">Fatty acid metabolism</keyword>
<keyword id="KW-0444">Lipid biosynthesis</keyword>
<keyword id="KW-0443">Lipid metabolism</keyword>
<keyword id="KW-0596">Phosphopantetheine</keyword>
<keyword id="KW-0597">Phosphoprotein</keyword>
<proteinExistence type="inferred from homology"/>
<protein>
    <recommendedName>
        <fullName evidence="1">Acyl carrier protein</fullName>
        <shortName evidence="1">ACP</shortName>
    </recommendedName>
</protein>
<dbReference type="EMBL" id="CP000857">
    <property type="protein sequence ID" value="ACN46656.1"/>
    <property type="molecule type" value="Genomic_DNA"/>
</dbReference>
<dbReference type="RefSeq" id="WP_000103754.1">
    <property type="nucleotide sequence ID" value="NC_012125.1"/>
</dbReference>
<dbReference type="SMR" id="C0Q798"/>
<dbReference type="GeneID" id="98387866"/>
<dbReference type="KEGG" id="sei:SPC_2552"/>
<dbReference type="HOGENOM" id="CLU_108696_5_1_6"/>
<dbReference type="UniPathway" id="UPA00094"/>
<dbReference type="Proteomes" id="UP000001599">
    <property type="component" value="Chromosome"/>
</dbReference>
<dbReference type="GO" id="GO:0005829">
    <property type="term" value="C:cytosol"/>
    <property type="evidence" value="ECO:0007669"/>
    <property type="project" value="TreeGrafter"/>
</dbReference>
<dbReference type="GO" id="GO:0016020">
    <property type="term" value="C:membrane"/>
    <property type="evidence" value="ECO:0007669"/>
    <property type="project" value="GOC"/>
</dbReference>
<dbReference type="GO" id="GO:0000035">
    <property type="term" value="F:acyl binding"/>
    <property type="evidence" value="ECO:0007669"/>
    <property type="project" value="TreeGrafter"/>
</dbReference>
<dbReference type="GO" id="GO:0000036">
    <property type="term" value="F:acyl carrier activity"/>
    <property type="evidence" value="ECO:0007669"/>
    <property type="project" value="UniProtKB-UniRule"/>
</dbReference>
<dbReference type="GO" id="GO:0009245">
    <property type="term" value="P:lipid A biosynthetic process"/>
    <property type="evidence" value="ECO:0007669"/>
    <property type="project" value="TreeGrafter"/>
</dbReference>
<dbReference type="FunFam" id="1.10.1200.10:FF:000001">
    <property type="entry name" value="Acyl carrier protein"/>
    <property type="match status" value="1"/>
</dbReference>
<dbReference type="Gene3D" id="1.10.1200.10">
    <property type="entry name" value="ACP-like"/>
    <property type="match status" value="1"/>
</dbReference>
<dbReference type="HAMAP" id="MF_01217">
    <property type="entry name" value="Acyl_carrier"/>
    <property type="match status" value="1"/>
</dbReference>
<dbReference type="InterPro" id="IPR003231">
    <property type="entry name" value="ACP"/>
</dbReference>
<dbReference type="InterPro" id="IPR036736">
    <property type="entry name" value="ACP-like_sf"/>
</dbReference>
<dbReference type="InterPro" id="IPR009081">
    <property type="entry name" value="PP-bd_ACP"/>
</dbReference>
<dbReference type="InterPro" id="IPR006162">
    <property type="entry name" value="Ppantetheine_attach_site"/>
</dbReference>
<dbReference type="NCBIfam" id="TIGR00517">
    <property type="entry name" value="acyl_carrier"/>
    <property type="match status" value="1"/>
</dbReference>
<dbReference type="NCBIfam" id="NF002148">
    <property type="entry name" value="PRK00982.1-2"/>
    <property type="match status" value="1"/>
</dbReference>
<dbReference type="NCBIfam" id="NF002149">
    <property type="entry name" value="PRK00982.1-3"/>
    <property type="match status" value="1"/>
</dbReference>
<dbReference type="NCBIfam" id="NF002150">
    <property type="entry name" value="PRK00982.1-4"/>
    <property type="match status" value="1"/>
</dbReference>
<dbReference type="NCBIfam" id="NF002151">
    <property type="entry name" value="PRK00982.1-5"/>
    <property type="match status" value="1"/>
</dbReference>
<dbReference type="PANTHER" id="PTHR20863">
    <property type="entry name" value="ACYL CARRIER PROTEIN"/>
    <property type="match status" value="1"/>
</dbReference>
<dbReference type="PANTHER" id="PTHR20863:SF76">
    <property type="entry name" value="CARRIER DOMAIN-CONTAINING PROTEIN"/>
    <property type="match status" value="1"/>
</dbReference>
<dbReference type="Pfam" id="PF00550">
    <property type="entry name" value="PP-binding"/>
    <property type="match status" value="1"/>
</dbReference>
<dbReference type="SUPFAM" id="SSF47336">
    <property type="entry name" value="ACP-like"/>
    <property type="match status" value="1"/>
</dbReference>
<dbReference type="PROSITE" id="PS50075">
    <property type="entry name" value="CARRIER"/>
    <property type="match status" value="1"/>
</dbReference>
<dbReference type="PROSITE" id="PS00012">
    <property type="entry name" value="PHOSPHOPANTETHEINE"/>
    <property type="match status" value="1"/>
</dbReference>
<name>ACP_SALPC</name>
<sequence length="78" mass="8640">MSTIEERVKKIIGEQLGVKQEEVTNNASFVEDLGADSLDTVELVMALEEEFDTEIPDEEAEKITTVQAAIDYINGHQA</sequence>